<reference key="1">
    <citation type="journal article" date="2005" name="DNA Res.">
        <title>Complete genome sequence of the facultative anaerobic magnetotactic bacterium Magnetospirillum sp. strain AMB-1.</title>
        <authorList>
            <person name="Matsunaga T."/>
            <person name="Okamura Y."/>
            <person name="Fukuda Y."/>
            <person name="Wahyudi A.T."/>
            <person name="Murase Y."/>
            <person name="Takeyama H."/>
        </authorList>
    </citation>
    <scope>NUCLEOTIDE SEQUENCE [LARGE SCALE GENOMIC DNA]</scope>
    <source>
        <strain>ATCC 700264 / AMB-1</strain>
    </source>
</reference>
<evidence type="ECO:0000255" key="1">
    <source>
        <dbReference type="HAMAP-Rule" id="MF_00379"/>
    </source>
</evidence>
<evidence type="ECO:0000305" key="2"/>
<accession>Q2WBH0</accession>
<dbReference type="EC" id="3.6.-.-" evidence="1"/>
<dbReference type="EMBL" id="AP007255">
    <property type="protein sequence ID" value="BAE48805.1"/>
    <property type="status" value="ALT_INIT"/>
    <property type="molecule type" value="Genomic_DNA"/>
</dbReference>
<dbReference type="RefSeq" id="WP_043742958.1">
    <property type="nucleotide sequence ID" value="NC_007626.1"/>
</dbReference>
<dbReference type="SMR" id="Q2WBH0"/>
<dbReference type="STRING" id="342108.amb0001"/>
<dbReference type="KEGG" id="mag:amb0001"/>
<dbReference type="HOGENOM" id="CLU_019624_3_1_5"/>
<dbReference type="OrthoDB" id="9805918at2"/>
<dbReference type="Proteomes" id="UP000007058">
    <property type="component" value="Chromosome"/>
</dbReference>
<dbReference type="GO" id="GO:0005737">
    <property type="term" value="C:cytoplasm"/>
    <property type="evidence" value="ECO:0007669"/>
    <property type="project" value="UniProtKB-SubCell"/>
</dbReference>
<dbReference type="GO" id="GO:0005525">
    <property type="term" value="F:GTP binding"/>
    <property type="evidence" value="ECO:0007669"/>
    <property type="project" value="UniProtKB-UniRule"/>
</dbReference>
<dbReference type="GO" id="GO:0003924">
    <property type="term" value="F:GTPase activity"/>
    <property type="evidence" value="ECO:0007669"/>
    <property type="project" value="UniProtKB-UniRule"/>
</dbReference>
<dbReference type="GO" id="GO:0046872">
    <property type="term" value="F:metal ion binding"/>
    <property type="evidence" value="ECO:0007669"/>
    <property type="project" value="UniProtKB-KW"/>
</dbReference>
<dbReference type="GO" id="GO:0030488">
    <property type="term" value="P:tRNA methylation"/>
    <property type="evidence" value="ECO:0007669"/>
    <property type="project" value="TreeGrafter"/>
</dbReference>
<dbReference type="GO" id="GO:0002098">
    <property type="term" value="P:tRNA wobble uridine modification"/>
    <property type="evidence" value="ECO:0007669"/>
    <property type="project" value="TreeGrafter"/>
</dbReference>
<dbReference type="CDD" id="cd04164">
    <property type="entry name" value="trmE"/>
    <property type="match status" value="1"/>
</dbReference>
<dbReference type="CDD" id="cd14858">
    <property type="entry name" value="TrmE_N"/>
    <property type="match status" value="1"/>
</dbReference>
<dbReference type="FunFam" id="3.30.1360.120:FF:000007">
    <property type="entry name" value="tRNA modification GTPase GTPBP3, mitochondrial"/>
    <property type="match status" value="1"/>
</dbReference>
<dbReference type="Gene3D" id="3.40.50.300">
    <property type="entry name" value="P-loop containing nucleotide triphosphate hydrolases"/>
    <property type="match status" value="1"/>
</dbReference>
<dbReference type="Gene3D" id="3.30.1360.120">
    <property type="entry name" value="Probable tRNA modification gtpase trme, domain 1"/>
    <property type="match status" value="1"/>
</dbReference>
<dbReference type="Gene3D" id="1.20.120.430">
    <property type="entry name" value="tRNA modification GTPase MnmE domain 2"/>
    <property type="match status" value="1"/>
</dbReference>
<dbReference type="HAMAP" id="MF_00379">
    <property type="entry name" value="GTPase_MnmE"/>
    <property type="match status" value="1"/>
</dbReference>
<dbReference type="InterPro" id="IPR031168">
    <property type="entry name" value="G_TrmE"/>
</dbReference>
<dbReference type="InterPro" id="IPR006073">
    <property type="entry name" value="GTP-bd"/>
</dbReference>
<dbReference type="InterPro" id="IPR018948">
    <property type="entry name" value="GTP-bd_TrmE_N"/>
</dbReference>
<dbReference type="InterPro" id="IPR004520">
    <property type="entry name" value="GTPase_MnmE"/>
</dbReference>
<dbReference type="InterPro" id="IPR027368">
    <property type="entry name" value="MnmE_dom2"/>
</dbReference>
<dbReference type="InterPro" id="IPR025867">
    <property type="entry name" value="MnmE_helical"/>
</dbReference>
<dbReference type="InterPro" id="IPR027417">
    <property type="entry name" value="P-loop_NTPase"/>
</dbReference>
<dbReference type="InterPro" id="IPR005225">
    <property type="entry name" value="Small_GTP-bd"/>
</dbReference>
<dbReference type="InterPro" id="IPR027266">
    <property type="entry name" value="TrmE/GcvT_dom1"/>
</dbReference>
<dbReference type="NCBIfam" id="TIGR00450">
    <property type="entry name" value="mnmE_trmE_thdF"/>
    <property type="match status" value="1"/>
</dbReference>
<dbReference type="NCBIfam" id="NF003661">
    <property type="entry name" value="PRK05291.1-3"/>
    <property type="match status" value="1"/>
</dbReference>
<dbReference type="NCBIfam" id="TIGR00231">
    <property type="entry name" value="small_GTP"/>
    <property type="match status" value="1"/>
</dbReference>
<dbReference type="PANTHER" id="PTHR42714">
    <property type="entry name" value="TRNA MODIFICATION GTPASE GTPBP3"/>
    <property type="match status" value="1"/>
</dbReference>
<dbReference type="PANTHER" id="PTHR42714:SF2">
    <property type="entry name" value="TRNA MODIFICATION GTPASE GTPBP3, MITOCHONDRIAL"/>
    <property type="match status" value="1"/>
</dbReference>
<dbReference type="Pfam" id="PF01926">
    <property type="entry name" value="MMR_HSR1"/>
    <property type="match status" value="1"/>
</dbReference>
<dbReference type="Pfam" id="PF12631">
    <property type="entry name" value="MnmE_helical"/>
    <property type="match status" value="1"/>
</dbReference>
<dbReference type="Pfam" id="PF10396">
    <property type="entry name" value="TrmE_N"/>
    <property type="match status" value="1"/>
</dbReference>
<dbReference type="PRINTS" id="PR00326">
    <property type="entry name" value="GTP1OBG"/>
</dbReference>
<dbReference type="SUPFAM" id="SSF52540">
    <property type="entry name" value="P-loop containing nucleoside triphosphate hydrolases"/>
    <property type="match status" value="1"/>
</dbReference>
<dbReference type="SUPFAM" id="SSF116878">
    <property type="entry name" value="TrmE connector domain"/>
    <property type="match status" value="1"/>
</dbReference>
<dbReference type="PROSITE" id="PS51709">
    <property type="entry name" value="G_TRME"/>
    <property type="match status" value="1"/>
</dbReference>
<keyword id="KW-0963">Cytoplasm</keyword>
<keyword id="KW-0342">GTP-binding</keyword>
<keyword id="KW-0378">Hydrolase</keyword>
<keyword id="KW-0460">Magnesium</keyword>
<keyword id="KW-0479">Metal-binding</keyword>
<keyword id="KW-0547">Nucleotide-binding</keyword>
<keyword id="KW-0630">Potassium</keyword>
<keyword id="KW-0819">tRNA processing</keyword>
<organism>
    <name type="scientific">Paramagnetospirillum magneticum (strain ATCC 700264 / AMB-1)</name>
    <name type="common">Magnetospirillum magneticum</name>
    <dbReference type="NCBI Taxonomy" id="342108"/>
    <lineage>
        <taxon>Bacteria</taxon>
        <taxon>Pseudomonadati</taxon>
        <taxon>Pseudomonadota</taxon>
        <taxon>Alphaproteobacteria</taxon>
        <taxon>Rhodospirillales</taxon>
        <taxon>Magnetospirillaceae</taxon>
        <taxon>Paramagnetospirillum</taxon>
    </lineage>
</organism>
<name>MNME_PARM1</name>
<gene>
    <name evidence="1" type="primary">mnmE</name>
    <name evidence="1" type="synonym">trmE</name>
    <name type="ordered locus">amb0001</name>
</gene>
<sequence>MSETIYALASAAGRAGIAVWRLSGEGSGTALSALTGKPLPEPRRARRVRLRDGAGEVLDDGLVLWFPAPHSFTGEDVAELHLHGGRAVAAALTARLGELGLRPAEPGEFSRRAFLNGKLDLTRAEAIADLVDAETAAQRRQALRQLDGGLAGLVEGWRSALVRAMAHLEAVIDFADEDIPDTLLEQSVGEVRSLRREMEVHLDERRNGERLRDGIHITILGAPNAGKSSLLNRLAGREAAIVSAQAGTTRDVIEVHLDLGGWPVIVADTAGLRDSACEIESEGVRRAADRAAKADLRLCVFDGTLYPNLDAATLEMIDDATLVVLNKRDLMTGETPASINGRPVLTLSAKAGEGVDDLVAELARVVESRFAMGSAPVLTRERHRVAVAEAVAALSRFDPGLGIEMAAEDLRLAARSLGRITGRVDVEEILDVIFHEFCIGK</sequence>
<comment type="function">
    <text evidence="1">Exhibits a very high intrinsic GTPase hydrolysis rate. Involved in the addition of a carboxymethylaminomethyl (cmnm) group at the wobble position (U34) of certain tRNAs, forming tRNA-cmnm(5)s(2)U34.</text>
</comment>
<comment type="cofactor">
    <cofactor evidence="1">
        <name>K(+)</name>
        <dbReference type="ChEBI" id="CHEBI:29103"/>
    </cofactor>
    <text evidence="1">Binds 1 potassium ion per subunit.</text>
</comment>
<comment type="subunit">
    <text evidence="1">Homodimer. Heterotetramer of two MnmE and two MnmG subunits.</text>
</comment>
<comment type="subcellular location">
    <subcellularLocation>
        <location evidence="1">Cytoplasm</location>
    </subcellularLocation>
</comment>
<comment type="similarity">
    <text evidence="1">Belongs to the TRAFAC class TrmE-Era-EngA-EngB-Septin-like GTPase superfamily. TrmE GTPase family.</text>
</comment>
<comment type="sequence caution" evidence="2">
    <conflict type="erroneous initiation">
        <sequence resource="EMBL-CDS" id="BAE48805"/>
    </conflict>
</comment>
<proteinExistence type="inferred from homology"/>
<feature type="chain" id="PRO_0000345825" description="tRNA modification GTPase MnmE">
    <location>
        <begin position="1"/>
        <end position="441"/>
    </location>
</feature>
<feature type="domain" description="TrmE-type G">
    <location>
        <begin position="214"/>
        <end position="367"/>
    </location>
</feature>
<feature type="binding site" evidence="1">
    <location>
        <position position="21"/>
    </location>
    <ligand>
        <name>(6S)-5-formyl-5,6,7,8-tetrahydrofolate</name>
        <dbReference type="ChEBI" id="CHEBI:57457"/>
    </ligand>
</feature>
<feature type="binding site" evidence="1">
    <location>
        <position position="79"/>
    </location>
    <ligand>
        <name>(6S)-5-formyl-5,6,7,8-tetrahydrofolate</name>
        <dbReference type="ChEBI" id="CHEBI:57457"/>
    </ligand>
</feature>
<feature type="binding site" evidence="1">
    <location>
        <position position="118"/>
    </location>
    <ligand>
        <name>(6S)-5-formyl-5,6,7,8-tetrahydrofolate</name>
        <dbReference type="ChEBI" id="CHEBI:57457"/>
    </ligand>
</feature>
<feature type="binding site" evidence="1">
    <location>
        <begin position="224"/>
        <end position="229"/>
    </location>
    <ligand>
        <name>GTP</name>
        <dbReference type="ChEBI" id="CHEBI:37565"/>
    </ligand>
</feature>
<feature type="binding site" evidence="1">
    <location>
        <position position="228"/>
    </location>
    <ligand>
        <name>Mg(2+)</name>
        <dbReference type="ChEBI" id="CHEBI:18420"/>
    </ligand>
</feature>
<feature type="binding site" evidence="1">
    <location>
        <begin position="243"/>
        <end position="249"/>
    </location>
    <ligand>
        <name>GTP</name>
        <dbReference type="ChEBI" id="CHEBI:37565"/>
    </ligand>
</feature>
<feature type="binding site" evidence="1">
    <location>
        <position position="249"/>
    </location>
    <ligand>
        <name>Mg(2+)</name>
        <dbReference type="ChEBI" id="CHEBI:18420"/>
    </ligand>
</feature>
<feature type="binding site" evidence="1">
    <location>
        <begin position="268"/>
        <end position="271"/>
    </location>
    <ligand>
        <name>GTP</name>
        <dbReference type="ChEBI" id="CHEBI:37565"/>
    </ligand>
</feature>
<feature type="binding site" evidence="1">
    <location>
        <position position="441"/>
    </location>
    <ligand>
        <name>(6S)-5-formyl-5,6,7,8-tetrahydrofolate</name>
        <dbReference type="ChEBI" id="CHEBI:57457"/>
    </ligand>
</feature>
<protein>
    <recommendedName>
        <fullName evidence="1">tRNA modification GTPase MnmE</fullName>
        <ecNumber evidence="1">3.6.-.-</ecNumber>
    </recommendedName>
</protein>